<evidence type="ECO:0000256" key="1">
    <source>
        <dbReference type="SAM" id="MobiDB-lite"/>
    </source>
</evidence>
<evidence type="ECO:0000269" key="2">
    <source ref="1"/>
</evidence>
<evidence type="ECO:0000305" key="3"/>
<name>HELN_HELVI</name>
<organism evidence="3">
    <name type="scientific">Heliothis virescens</name>
    <name type="common">Tobacco budworm moth</name>
    <dbReference type="NCBI Taxonomy" id="7102"/>
    <lineage>
        <taxon>Eukaryota</taxon>
        <taxon>Metazoa</taxon>
        <taxon>Ecdysozoa</taxon>
        <taxon>Arthropoda</taxon>
        <taxon>Hexapoda</taxon>
        <taxon>Insecta</taxon>
        <taxon>Pterygota</taxon>
        <taxon>Neoptera</taxon>
        <taxon>Endopterygota</taxon>
        <taxon>Lepidoptera</taxon>
        <taxon>Glossata</taxon>
        <taxon>Ditrysia</taxon>
        <taxon>Noctuoidea</taxon>
        <taxon>Noctuidae</taxon>
        <taxon>Heliothinae</taxon>
        <taxon>Heliothis</taxon>
    </lineage>
</organism>
<keyword id="KW-0002">3D-structure</keyword>
<keyword id="KW-0044">Antibiotic</keyword>
<keyword id="KW-0929">Antimicrobial</keyword>
<keyword id="KW-0903">Direct protein sequencing</keyword>
<keyword id="KW-0325">Glycoprotein</keyword>
<keyword id="KW-0391">Immunity</keyword>
<keyword id="KW-0399">Innate immunity</keyword>
<keyword id="KW-0873">Pyrrolidone carboxylic acid</keyword>
<keyword id="KW-0964">Secreted</keyword>
<dbReference type="PDB" id="4EZT">
    <property type="method" value="X-ray"/>
    <property type="resolution" value="2.00 A"/>
    <property type="chains" value="B=14-21"/>
</dbReference>
<dbReference type="PDBsum" id="4EZT"/>
<dbReference type="SMR" id="P83427"/>
<dbReference type="EvolutionaryTrace" id="P83427"/>
<dbReference type="GO" id="GO:0005576">
    <property type="term" value="C:extracellular region"/>
    <property type="evidence" value="ECO:0007669"/>
    <property type="project" value="UniProtKB-SubCell"/>
</dbReference>
<dbReference type="GO" id="GO:0042742">
    <property type="term" value="P:defense response to bacterium"/>
    <property type="evidence" value="ECO:0007669"/>
    <property type="project" value="UniProtKB-KW"/>
</dbReference>
<dbReference type="GO" id="GO:0045087">
    <property type="term" value="P:innate immune response"/>
    <property type="evidence" value="ECO:0007669"/>
    <property type="project" value="UniProtKB-KW"/>
</dbReference>
<protein>
    <recommendedName>
        <fullName>Heliocin</fullName>
    </recommendedName>
</protein>
<comment type="function">
    <text evidence="2">Has antibacterial activity, preferentially against Gram-negative bacteria.</text>
</comment>
<comment type="subunit">
    <text evidence="2 3">Monomer.</text>
</comment>
<comment type="subcellular location">
    <subcellularLocation>
        <location evidence="2 3">Secreted</location>
    </subcellularLocation>
</comment>
<comment type="tissue specificity">
    <text evidence="2 3">Hemolymph.</text>
</comment>
<comment type="induction">
    <text evidence="3">By bacterial infection.</text>
</comment>
<comment type="mass spectrometry" mass="2901.89" method="MALDI" evidence="2"/>
<comment type="similarity">
    <text evidence="3">Belongs to the lebocin family.</text>
</comment>
<reference evidence="3" key="1">
    <citation type="submission" date="2002-07" db="UniProtKB">
        <authorList>
            <person name="Bulet P."/>
            <person name="Lamberty M."/>
            <person name="Charlet M."/>
            <person name="Sabatier L."/>
            <person name="Rabel D."/>
        </authorList>
    </citation>
    <scope>PROTEIN SEQUENCE</scope>
    <scope>FUNCTION</scope>
    <scope>SUBUNIT</scope>
    <scope>SUBCELLULAR LOCATION</scope>
    <scope>TISSUE SPECIFICITY</scope>
    <scope>MASS SPECTROMETRY</scope>
    <scope>PYROGLUTAMATE FORMATION AT GLN-1</scope>
    <scope>GLYCOSYLATION AT THR-7</scope>
    <source>
        <tissue>Hemolymph</tissue>
    </source>
</reference>
<feature type="peptide" id="PRO_0000043594" description="Heliocin">
    <location>
        <begin position="1"/>
        <end position="22"/>
    </location>
</feature>
<feature type="region of interest" description="Disordered" evidence="1">
    <location>
        <begin position="1"/>
        <end position="22"/>
    </location>
</feature>
<feature type="modified residue" description="Pyrrolidone carboxylic acid" evidence="2">
    <location>
        <position position="1"/>
    </location>
</feature>
<feature type="glycosylation site" description="O-linked (GalNAc...) threonine" evidence="2">
    <location>
        <position position="7"/>
    </location>
</feature>
<sequence length="22" mass="2714">QRFIHPTYRPPPQPRRPVIMRA</sequence>
<accession>P83427</accession>
<proteinExistence type="evidence at protein level"/>